<gene>
    <name evidence="2" type="primary">trmB</name>
    <name type="ordered locus">SAB1608c</name>
</gene>
<proteinExistence type="inferred from homology"/>
<keyword id="KW-0489">Methyltransferase</keyword>
<keyword id="KW-0949">S-adenosyl-L-methionine</keyword>
<keyword id="KW-0808">Transferase</keyword>
<keyword id="KW-0819">tRNA processing</keyword>
<sequence length="214" mass="25276">MRVRYKPWAEDYLKDHPELVDMDGQHAGKMTEWFDKTQPIHIEIGSGMGQFITTLAAQNPHINYISMEREKSIVYKVLDKVKEMGLTNLKIICNDAIELNEYFKDGEVSRIYLNFSDPWPKNRHAKRRLTYHTFLALYQQILNDEGDLHFKTDNRGLFAYSLESMSQFGMYFTKINLNLHQEDDGSNILTEYEKKFSDKGSRIYRMEAKFHSQK</sequence>
<feature type="chain" id="PRO_0000229199" description="tRNA (guanine-N(7)-)-methyltransferase">
    <location>
        <begin position="1"/>
        <end position="214"/>
    </location>
</feature>
<feature type="active site" evidence="1">
    <location>
        <position position="117"/>
    </location>
</feature>
<feature type="binding site" evidence="2">
    <location>
        <position position="43"/>
    </location>
    <ligand>
        <name>S-adenosyl-L-methionine</name>
        <dbReference type="ChEBI" id="CHEBI:59789"/>
    </ligand>
</feature>
<feature type="binding site" evidence="2">
    <location>
        <position position="68"/>
    </location>
    <ligand>
        <name>S-adenosyl-L-methionine</name>
        <dbReference type="ChEBI" id="CHEBI:59789"/>
    </ligand>
</feature>
<feature type="binding site" evidence="2">
    <location>
        <position position="95"/>
    </location>
    <ligand>
        <name>S-adenosyl-L-methionine</name>
        <dbReference type="ChEBI" id="CHEBI:59789"/>
    </ligand>
</feature>
<feature type="binding site" evidence="2">
    <location>
        <position position="117"/>
    </location>
    <ligand>
        <name>S-adenosyl-L-methionine</name>
        <dbReference type="ChEBI" id="CHEBI:59789"/>
    </ligand>
</feature>
<feature type="binding site" evidence="2">
    <location>
        <position position="121"/>
    </location>
    <ligand>
        <name>substrate</name>
    </ligand>
</feature>
<feature type="binding site" evidence="2">
    <location>
        <position position="153"/>
    </location>
    <ligand>
        <name>substrate</name>
    </ligand>
</feature>
<feature type="binding site" evidence="2">
    <location>
        <begin position="190"/>
        <end position="193"/>
    </location>
    <ligand>
        <name>substrate</name>
    </ligand>
</feature>
<evidence type="ECO:0000250" key="1"/>
<evidence type="ECO:0000255" key="2">
    <source>
        <dbReference type="HAMAP-Rule" id="MF_01057"/>
    </source>
</evidence>
<organism>
    <name type="scientific">Staphylococcus aureus (strain bovine RF122 / ET3-1)</name>
    <dbReference type="NCBI Taxonomy" id="273036"/>
    <lineage>
        <taxon>Bacteria</taxon>
        <taxon>Bacillati</taxon>
        <taxon>Bacillota</taxon>
        <taxon>Bacilli</taxon>
        <taxon>Bacillales</taxon>
        <taxon>Staphylococcaceae</taxon>
        <taxon>Staphylococcus</taxon>
    </lineage>
</organism>
<comment type="function">
    <text evidence="2">Catalyzes the formation of N(7)-methylguanine at position 46 (m7G46) in tRNA.</text>
</comment>
<comment type="catalytic activity">
    <reaction evidence="2">
        <text>guanosine(46) in tRNA + S-adenosyl-L-methionine = N(7)-methylguanosine(46) in tRNA + S-adenosyl-L-homocysteine</text>
        <dbReference type="Rhea" id="RHEA:42708"/>
        <dbReference type="Rhea" id="RHEA-COMP:10188"/>
        <dbReference type="Rhea" id="RHEA-COMP:10189"/>
        <dbReference type="ChEBI" id="CHEBI:57856"/>
        <dbReference type="ChEBI" id="CHEBI:59789"/>
        <dbReference type="ChEBI" id="CHEBI:74269"/>
        <dbReference type="ChEBI" id="CHEBI:74480"/>
        <dbReference type="EC" id="2.1.1.33"/>
    </reaction>
</comment>
<comment type="pathway">
    <text evidence="2">tRNA modification; N(7)-methylguanine-tRNA biosynthesis.</text>
</comment>
<comment type="similarity">
    <text evidence="2">Belongs to the class I-like SAM-binding methyltransferase superfamily. TrmB family.</text>
</comment>
<accession>Q2YTI8</accession>
<name>TRMB_STAAB</name>
<reference key="1">
    <citation type="journal article" date="2007" name="PLoS ONE">
        <title>Molecular correlates of host specialization in Staphylococcus aureus.</title>
        <authorList>
            <person name="Herron-Olson L."/>
            <person name="Fitzgerald J.R."/>
            <person name="Musser J.M."/>
            <person name="Kapur V."/>
        </authorList>
    </citation>
    <scope>NUCLEOTIDE SEQUENCE [LARGE SCALE GENOMIC DNA]</scope>
    <source>
        <strain>bovine RF122 / ET3-1</strain>
    </source>
</reference>
<dbReference type="EC" id="2.1.1.33" evidence="2"/>
<dbReference type="EMBL" id="AJ938182">
    <property type="protein sequence ID" value="CAI81297.1"/>
    <property type="molecule type" value="Genomic_DNA"/>
</dbReference>
<dbReference type="RefSeq" id="WP_001266157.1">
    <property type="nucleotide sequence ID" value="NC_007622.1"/>
</dbReference>
<dbReference type="SMR" id="Q2YTI8"/>
<dbReference type="KEGG" id="sab:SAB1608c"/>
<dbReference type="HOGENOM" id="CLU_050910_2_1_9"/>
<dbReference type="UniPathway" id="UPA00989"/>
<dbReference type="GO" id="GO:0043527">
    <property type="term" value="C:tRNA methyltransferase complex"/>
    <property type="evidence" value="ECO:0007669"/>
    <property type="project" value="TreeGrafter"/>
</dbReference>
<dbReference type="GO" id="GO:0008176">
    <property type="term" value="F:tRNA (guanine(46)-N7)-methyltransferase activity"/>
    <property type="evidence" value="ECO:0007669"/>
    <property type="project" value="UniProtKB-UniRule"/>
</dbReference>
<dbReference type="CDD" id="cd02440">
    <property type="entry name" value="AdoMet_MTases"/>
    <property type="match status" value="1"/>
</dbReference>
<dbReference type="FunFam" id="3.40.50.150:FF:000035">
    <property type="entry name" value="tRNA (guanine-N(7)-)-methyltransferase"/>
    <property type="match status" value="1"/>
</dbReference>
<dbReference type="Gene3D" id="3.40.50.150">
    <property type="entry name" value="Vaccinia Virus protein VP39"/>
    <property type="match status" value="1"/>
</dbReference>
<dbReference type="HAMAP" id="MF_01057">
    <property type="entry name" value="tRNA_methyltr_TrmB"/>
    <property type="match status" value="1"/>
</dbReference>
<dbReference type="InterPro" id="IPR029063">
    <property type="entry name" value="SAM-dependent_MTases_sf"/>
</dbReference>
<dbReference type="InterPro" id="IPR003358">
    <property type="entry name" value="tRNA_(Gua-N-7)_MeTrfase_Trmb"/>
</dbReference>
<dbReference type="InterPro" id="IPR055361">
    <property type="entry name" value="tRNA_methyltr_TrmB_bact"/>
</dbReference>
<dbReference type="NCBIfam" id="NF001080">
    <property type="entry name" value="PRK00121.2-2"/>
    <property type="match status" value="1"/>
</dbReference>
<dbReference type="NCBIfam" id="TIGR00091">
    <property type="entry name" value="tRNA (guanosine(46)-N7)-methyltransferase TrmB"/>
    <property type="match status" value="1"/>
</dbReference>
<dbReference type="PANTHER" id="PTHR23417">
    <property type="entry name" value="3-DEOXY-D-MANNO-OCTULOSONIC-ACID TRANSFERASE/TRNA GUANINE-N 7 - -METHYLTRANSFERASE"/>
    <property type="match status" value="1"/>
</dbReference>
<dbReference type="PANTHER" id="PTHR23417:SF14">
    <property type="entry name" value="PENTACOTRIPEPTIDE-REPEAT REGION OF PRORP DOMAIN-CONTAINING PROTEIN"/>
    <property type="match status" value="1"/>
</dbReference>
<dbReference type="Pfam" id="PF02390">
    <property type="entry name" value="Methyltransf_4"/>
    <property type="match status" value="1"/>
</dbReference>
<dbReference type="SUPFAM" id="SSF53335">
    <property type="entry name" value="S-adenosyl-L-methionine-dependent methyltransferases"/>
    <property type="match status" value="1"/>
</dbReference>
<dbReference type="PROSITE" id="PS51625">
    <property type="entry name" value="SAM_MT_TRMB"/>
    <property type="match status" value="1"/>
</dbReference>
<protein>
    <recommendedName>
        <fullName evidence="2">tRNA (guanine-N(7)-)-methyltransferase</fullName>
        <ecNumber evidence="2">2.1.1.33</ecNumber>
    </recommendedName>
    <alternativeName>
        <fullName evidence="2">tRNA (guanine(46)-N(7))-methyltransferase</fullName>
    </alternativeName>
    <alternativeName>
        <fullName evidence="2">tRNA(m7G46)-methyltransferase</fullName>
    </alternativeName>
</protein>